<keyword id="KW-1185">Reference proteome</keyword>
<keyword id="KW-0687">Ribonucleoprotein</keyword>
<keyword id="KW-0689">Ribosomal protein</keyword>
<keyword id="KW-0694">RNA-binding</keyword>
<keyword id="KW-0699">rRNA-binding</keyword>
<dbReference type="EMBL" id="X14967">
    <property type="protein sequence ID" value="CAA33093.1"/>
    <property type="molecule type" value="Genomic_DNA"/>
</dbReference>
<dbReference type="EMBL" id="AB006961">
    <property type="protein sequence ID" value="BAA22276.1"/>
    <property type="molecule type" value="Genomic_DNA"/>
</dbReference>
<dbReference type="EMBL" id="AE004437">
    <property type="protein sequence ID" value="AAG19942.1"/>
    <property type="molecule type" value="Genomic_DNA"/>
</dbReference>
<dbReference type="PIR" id="B84322">
    <property type="entry name" value="B84322"/>
</dbReference>
<dbReference type="PIR" id="T43822">
    <property type="entry name" value="T43822"/>
</dbReference>
<dbReference type="RefSeq" id="WP_010903240.1">
    <property type="nucleotide sequence ID" value="NC_002607.1"/>
</dbReference>
<dbReference type="SMR" id="P15009"/>
<dbReference type="FunCoup" id="P15009">
    <property type="interactions" value="152"/>
</dbReference>
<dbReference type="STRING" id="64091.VNG_1697G"/>
<dbReference type="PaxDb" id="64091-VNG_1697G"/>
<dbReference type="KEGG" id="hal:VNG_1697G"/>
<dbReference type="PATRIC" id="fig|64091.14.peg.1294"/>
<dbReference type="HOGENOM" id="CLU_058591_1_0_2"/>
<dbReference type="InParanoid" id="P15009"/>
<dbReference type="OrthoDB" id="9126at2157"/>
<dbReference type="PhylomeDB" id="P15009"/>
<dbReference type="Proteomes" id="UP000000554">
    <property type="component" value="Chromosome"/>
</dbReference>
<dbReference type="GO" id="GO:0022627">
    <property type="term" value="C:cytosolic small ribosomal subunit"/>
    <property type="evidence" value="ECO:0000318"/>
    <property type="project" value="GO_Central"/>
</dbReference>
<dbReference type="GO" id="GO:0019843">
    <property type="term" value="F:rRNA binding"/>
    <property type="evidence" value="ECO:0007669"/>
    <property type="project" value="UniProtKB-UniRule"/>
</dbReference>
<dbReference type="GO" id="GO:0003735">
    <property type="term" value="F:structural constituent of ribosome"/>
    <property type="evidence" value="ECO:0000318"/>
    <property type="project" value="GO_Central"/>
</dbReference>
<dbReference type="GO" id="GO:0006412">
    <property type="term" value="P:translation"/>
    <property type="evidence" value="ECO:0007669"/>
    <property type="project" value="UniProtKB-UniRule"/>
</dbReference>
<dbReference type="CDD" id="cd02411">
    <property type="entry name" value="KH-II_30S_S3_arch"/>
    <property type="match status" value="1"/>
</dbReference>
<dbReference type="FunFam" id="3.30.1140.32:FF:000012">
    <property type="entry name" value="30S ribosomal protein S3"/>
    <property type="match status" value="1"/>
</dbReference>
<dbReference type="FunFam" id="3.30.300.20:FF:000001">
    <property type="entry name" value="30S ribosomal protein S3"/>
    <property type="match status" value="1"/>
</dbReference>
<dbReference type="Gene3D" id="3.30.300.20">
    <property type="match status" value="1"/>
</dbReference>
<dbReference type="Gene3D" id="3.30.1140.32">
    <property type="entry name" value="Ribosomal protein S3, C-terminal domain"/>
    <property type="match status" value="1"/>
</dbReference>
<dbReference type="HAMAP" id="MF_01309_A">
    <property type="entry name" value="Ribosomal_uS3_A"/>
    <property type="match status" value="1"/>
</dbReference>
<dbReference type="InterPro" id="IPR004087">
    <property type="entry name" value="KH_dom"/>
</dbReference>
<dbReference type="InterPro" id="IPR015946">
    <property type="entry name" value="KH_dom-like_a/b"/>
</dbReference>
<dbReference type="InterPro" id="IPR004044">
    <property type="entry name" value="KH_dom_type_2"/>
</dbReference>
<dbReference type="InterPro" id="IPR009019">
    <property type="entry name" value="KH_sf_prok-type"/>
</dbReference>
<dbReference type="InterPro" id="IPR036419">
    <property type="entry name" value="Ribosomal_S3_C_sf"/>
</dbReference>
<dbReference type="InterPro" id="IPR027488">
    <property type="entry name" value="Ribosomal_uS3_arc"/>
</dbReference>
<dbReference type="InterPro" id="IPR001351">
    <property type="entry name" value="Ribosomal_uS3_C"/>
</dbReference>
<dbReference type="InterPro" id="IPR018280">
    <property type="entry name" value="Ribosomal_uS3_CS"/>
</dbReference>
<dbReference type="InterPro" id="IPR005703">
    <property type="entry name" value="Ribosomal_uS3_euk/arc"/>
</dbReference>
<dbReference type="NCBIfam" id="NF003219">
    <property type="entry name" value="PRK04191.1"/>
    <property type="match status" value="1"/>
</dbReference>
<dbReference type="NCBIfam" id="TIGR01008">
    <property type="entry name" value="uS3_euk_arch"/>
    <property type="match status" value="1"/>
</dbReference>
<dbReference type="PANTHER" id="PTHR11760">
    <property type="entry name" value="30S/40S RIBOSOMAL PROTEIN S3"/>
    <property type="match status" value="1"/>
</dbReference>
<dbReference type="PANTHER" id="PTHR11760:SF32">
    <property type="entry name" value="SMALL RIBOSOMAL SUBUNIT PROTEIN US3"/>
    <property type="match status" value="1"/>
</dbReference>
<dbReference type="Pfam" id="PF07650">
    <property type="entry name" value="KH_2"/>
    <property type="match status" value="1"/>
</dbReference>
<dbReference type="Pfam" id="PF00189">
    <property type="entry name" value="Ribosomal_S3_C"/>
    <property type="match status" value="1"/>
</dbReference>
<dbReference type="SMART" id="SM00322">
    <property type="entry name" value="KH"/>
    <property type="match status" value="1"/>
</dbReference>
<dbReference type="SUPFAM" id="SSF54814">
    <property type="entry name" value="Prokaryotic type KH domain (KH-domain type II)"/>
    <property type="match status" value="1"/>
</dbReference>
<dbReference type="SUPFAM" id="SSF54821">
    <property type="entry name" value="Ribosomal protein S3 C-terminal domain"/>
    <property type="match status" value="1"/>
</dbReference>
<dbReference type="PROSITE" id="PS50823">
    <property type="entry name" value="KH_TYPE_2"/>
    <property type="match status" value="1"/>
</dbReference>
<dbReference type="PROSITE" id="PS00548">
    <property type="entry name" value="RIBOSOMAL_S3"/>
    <property type="match status" value="1"/>
</dbReference>
<proteinExistence type="inferred from homology"/>
<evidence type="ECO:0000255" key="1">
    <source>
        <dbReference type="HAMAP-Rule" id="MF_01309"/>
    </source>
</evidence>
<evidence type="ECO:0000256" key="2">
    <source>
        <dbReference type="SAM" id="MobiDB-lite"/>
    </source>
</evidence>
<evidence type="ECO:0000305" key="3"/>
<gene>
    <name evidence="1" type="primary">rps3</name>
    <name type="ordered locus">VNG_1697G</name>
</gene>
<comment type="function">
    <text evidence="1">Binds the lower part of the 30S subunit head.</text>
</comment>
<comment type="subunit">
    <text>Part of the 30S ribosomal subunit.</text>
</comment>
<comment type="similarity">
    <text evidence="1">Belongs to the universal ribosomal protein uS3 family.</text>
</comment>
<accession>P15009</accession>
<accession>O24784</accession>
<accession>Q9HPC8</accession>
<sequence length="302" mass="33071">MADELEFIEQGLQRSQIDEFFAEELARAGYGGMELAPTPMGMQIVLKAEKPGMVIGKGGKNIRKITTQLEERFDLEDPQIDVQEVEEPDLNAQIVADRLANALERGWYFRKAGHTTIDRIMESGALGAEIVLSGKVTGNRGRVEKFNRGYIKHNGEPAEEIVDHGKGVAVMKLGTIGVNVKIIPPNAELPDDFEIQEDADIEDLVVDEAEAGEDLEELLEGEDADAEDADADAAAEPESEPADFEDEEVIETDDDVEEELDELADAVEGEDEDDEFSDVDDEAADTAEDLLDEMDDEDGGAE</sequence>
<organism>
    <name type="scientific">Halobacterium salinarum (strain ATCC 700922 / JCM 11081 / NRC-1)</name>
    <name type="common">Halobacterium halobium</name>
    <dbReference type="NCBI Taxonomy" id="64091"/>
    <lineage>
        <taxon>Archaea</taxon>
        <taxon>Methanobacteriati</taxon>
        <taxon>Methanobacteriota</taxon>
        <taxon>Stenosarchaea group</taxon>
        <taxon>Halobacteria</taxon>
        <taxon>Halobacteriales</taxon>
        <taxon>Halobacteriaceae</taxon>
        <taxon>Halobacterium</taxon>
        <taxon>Halobacterium salinarum NRC-34001</taxon>
    </lineage>
</organism>
<reference key="1">
    <citation type="journal article" date="1989" name="Can. J. Microbiol.">
        <title>Ribosomal protein gene cluster of Halobacterium halobium: nucleotide sequence of the genes coding for S3 and L29 equivalent ribosomal proteins.</title>
        <authorList>
            <person name="Spiridonova V.A."/>
            <person name="Akhmanova A.S."/>
            <person name="Kagramanova V.K."/>
            <person name="Koepke A.K.E."/>
            <person name="Mankin A.S."/>
        </authorList>
    </citation>
    <scope>NUCLEOTIDE SEQUENCE [GENOMIC DNA]</scope>
</reference>
<reference key="2">
    <citation type="journal article" date="1996" name="Biochem. Mol. Biol. Int.">
        <title>Organization and nucleotide sequences of ten ribosomal protein genes from the region equivalent to the S10 operon in the archaebacterium, Halobacterium halobium.</title>
        <authorList>
            <person name="Miyokawa T."/>
            <person name="Urayama T."/>
            <person name="Shimooka K."/>
            <person name="Itoh T."/>
        </authorList>
    </citation>
    <scope>NUCLEOTIDE SEQUENCE [GENOMIC DNA]</scope>
</reference>
<reference key="3">
    <citation type="journal article" date="2000" name="Proc. Natl. Acad. Sci. U.S.A.">
        <title>Genome sequence of Halobacterium species NRC-1.</title>
        <authorList>
            <person name="Ng W.V."/>
            <person name="Kennedy S.P."/>
            <person name="Mahairas G.G."/>
            <person name="Berquist B."/>
            <person name="Pan M."/>
            <person name="Shukla H.D."/>
            <person name="Lasky S.R."/>
            <person name="Baliga N.S."/>
            <person name="Thorsson V."/>
            <person name="Sbrogna J."/>
            <person name="Swartzell S."/>
            <person name="Weir D."/>
            <person name="Hall J."/>
            <person name="Dahl T.A."/>
            <person name="Welti R."/>
            <person name="Goo Y.A."/>
            <person name="Leithauser B."/>
            <person name="Keller K."/>
            <person name="Cruz R."/>
            <person name="Danson M.J."/>
            <person name="Hough D.W."/>
            <person name="Maddocks D.G."/>
            <person name="Jablonski P.E."/>
            <person name="Krebs M.P."/>
            <person name="Angevine C.M."/>
            <person name="Dale H."/>
            <person name="Isenbarger T.A."/>
            <person name="Peck R.F."/>
            <person name="Pohlschroder M."/>
            <person name="Spudich J.L."/>
            <person name="Jung K.-H."/>
            <person name="Alam M."/>
            <person name="Freitas T."/>
            <person name="Hou S."/>
            <person name="Daniels C.J."/>
            <person name="Dennis P.P."/>
            <person name="Omer A.D."/>
            <person name="Ebhardt H."/>
            <person name="Lowe T.M."/>
            <person name="Liang P."/>
            <person name="Riley M."/>
            <person name="Hood L."/>
            <person name="DasSarma S."/>
        </authorList>
    </citation>
    <scope>NUCLEOTIDE SEQUENCE [LARGE SCALE GENOMIC DNA]</scope>
    <source>
        <strain>ATCC 700922 / JCM 11081 / NRC-1</strain>
    </source>
</reference>
<reference key="4">
    <citation type="journal article" date="1989" name="FEBS Lett.">
        <title>The nucleotide sequence of the genes coding for the S19 and L22 equivalent ribosomal proteins from Halobacterium halobium.</title>
        <authorList>
            <person name="Mankin A.S."/>
        </authorList>
    </citation>
    <scope>NUCLEOTIDE SEQUENCE [GENOMIC DNA] OF 1-16</scope>
</reference>
<protein>
    <recommendedName>
        <fullName evidence="1">Small ribosomal subunit protein uS3</fullName>
    </recommendedName>
    <alternativeName>
        <fullName evidence="3">30S ribosomal protein S3</fullName>
    </alternativeName>
    <alternativeName>
        <fullName>HHAS3</fullName>
    </alternativeName>
    <alternativeName>
        <fullName>HS4</fullName>
    </alternativeName>
</protein>
<feature type="chain" id="PRO_0000130248" description="Small ribosomal subunit protein uS3">
    <location>
        <begin position="1"/>
        <end position="302"/>
    </location>
</feature>
<feature type="domain" description="KH type-2" evidence="1">
    <location>
        <begin position="17"/>
        <end position="86"/>
    </location>
</feature>
<feature type="region of interest" description="Disordered" evidence="2">
    <location>
        <begin position="222"/>
        <end position="302"/>
    </location>
</feature>
<feature type="sequence conflict" description="In Ref. 1." evidence="3" ref="1">
    <original>G</original>
    <variation>S</variation>
    <location>
        <position position="32"/>
    </location>
</feature>
<name>RS3_HALSA</name>